<evidence type="ECO:0000255" key="1">
    <source>
        <dbReference type="HAMAP-Rule" id="MF_00236"/>
    </source>
</evidence>
<evidence type="ECO:0000256" key="2">
    <source>
        <dbReference type="SAM" id="MobiDB-lite"/>
    </source>
</evidence>
<gene>
    <name evidence="1" type="primary">tatA</name>
    <name type="ordered locus">BruAb1_0894</name>
</gene>
<reference key="1">
    <citation type="journal article" date="2005" name="J. Bacteriol.">
        <title>Completion of the genome sequence of Brucella abortus and comparison to the highly similar genomes of Brucella melitensis and Brucella suis.</title>
        <authorList>
            <person name="Halling S.M."/>
            <person name="Peterson-Burch B.D."/>
            <person name="Bricker B.J."/>
            <person name="Zuerner R.L."/>
            <person name="Qing Z."/>
            <person name="Li L.-L."/>
            <person name="Kapur V."/>
            <person name="Alt D.P."/>
            <person name="Olsen S.C."/>
        </authorList>
    </citation>
    <scope>NUCLEOTIDE SEQUENCE [LARGE SCALE GENOMIC DNA]</scope>
    <source>
        <strain>9-941</strain>
    </source>
</reference>
<proteinExistence type="inferred from homology"/>
<name>TATA_BRUAB</name>
<keyword id="KW-0997">Cell inner membrane</keyword>
<keyword id="KW-1003">Cell membrane</keyword>
<keyword id="KW-0472">Membrane</keyword>
<keyword id="KW-0653">Protein transport</keyword>
<keyword id="KW-0811">Translocation</keyword>
<keyword id="KW-0812">Transmembrane</keyword>
<keyword id="KW-1133">Transmembrane helix</keyword>
<keyword id="KW-0813">Transport</keyword>
<protein>
    <recommendedName>
        <fullName evidence="1">Sec-independent protein translocase protein TatA</fullName>
    </recommendedName>
</protein>
<sequence length="72" mass="7999">MGSFSIWHWLIVLAVVLLLFGRGKIPELMGDVAKGIKNFKQGMADEDAKEDPRTIDAKAEEPVKDVKKTTKS</sequence>
<accession>Q57DM5</accession>
<comment type="function">
    <text evidence="1">Part of the twin-arginine translocation (Tat) system that transports large folded proteins containing a characteristic twin-arginine motif in their signal peptide across membranes. TatA could form the protein-conducting channel of the Tat system.</text>
</comment>
<comment type="subunit">
    <text evidence="1">The Tat system comprises two distinct complexes: a TatABC complex, containing multiple copies of TatA, TatB and TatC subunits, and a separate TatA complex, containing only TatA subunits. Substrates initially bind to the TatABC complex, which probably triggers association of the separate TatA complex to form the active translocon.</text>
</comment>
<comment type="subcellular location">
    <subcellularLocation>
        <location evidence="1">Cell inner membrane</location>
        <topology evidence="1">Single-pass membrane protein</topology>
    </subcellularLocation>
</comment>
<comment type="similarity">
    <text evidence="1">Belongs to the TatA/E family.</text>
</comment>
<dbReference type="EMBL" id="AE017223">
    <property type="protein sequence ID" value="AAX74259.1"/>
    <property type="molecule type" value="Genomic_DNA"/>
</dbReference>
<dbReference type="RefSeq" id="WP_002964012.1">
    <property type="nucleotide sequence ID" value="NC_006932.1"/>
</dbReference>
<dbReference type="SMR" id="Q57DM5"/>
<dbReference type="EnsemblBacteria" id="AAX74259">
    <property type="protein sequence ID" value="AAX74259"/>
    <property type="gene ID" value="BruAb1_0894"/>
</dbReference>
<dbReference type="KEGG" id="bmb:BruAb1_0894"/>
<dbReference type="HOGENOM" id="CLU_086034_5_0_5"/>
<dbReference type="Proteomes" id="UP000000540">
    <property type="component" value="Chromosome I"/>
</dbReference>
<dbReference type="GO" id="GO:0033281">
    <property type="term" value="C:TAT protein transport complex"/>
    <property type="evidence" value="ECO:0007669"/>
    <property type="project" value="UniProtKB-UniRule"/>
</dbReference>
<dbReference type="GO" id="GO:0008320">
    <property type="term" value="F:protein transmembrane transporter activity"/>
    <property type="evidence" value="ECO:0007669"/>
    <property type="project" value="UniProtKB-UniRule"/>
</dbReference>
<dbReference type="GO" id="GO:0043953">
    <property type="term" value="P:protein transport by the Tat complex"/>
    <property type="evidence" value="ECO:0007669"/>
    <property type="project" value="UniProtKB-UniRule"/>
</dbReference>
<dbReference type="Gene3D" id="1.20.5.3310">
    <property type="match status" value="1"/>
</dbReference>
<dbReference type="HAMAP" id="MF_00236">
    <property type="entry name" value="TatA_E"/>
    <property type="match status" value="1"/>
</dbReference>
<dbReference type="InterPro" id="IPR003369">
    <property type="entry name" value="TatA/B/E"/>
</dbReference>
<dbReference type="InterPro" id="IPR006312">
    <property type="entry name" value="TatA/E"/>
</dbReference>
<dbReference type="NCBIfam" id="NF001940">
    <property type="entry name" value="PRK00720.1"/>
    <property type="match status" value="1"/>
</dbReference>
<dbReference type="NCBIfam" id="TIGR01411">
    <property type="entry name" value="tatAE"/>
    <property type="match status" value="1"/>
</dbReference>
<dbReference type="PANTHER" id="PTHR42982">
    <property type="entry name" value="SEC-INDEPENDENT PROTEIN TRANSLOCASE PROTEIN TATA"/>
    <property type="match status" value="1"/>
</dbReference>
<dbReference type="PANTHER" id="PTHR42982:SF1">
    <property type="entry name" value="SEC-INDEPENDENT PROTEIN TRANSLOCASE PROTEIN TATA"/>
    <property type="match status" value="1"/>
</dbReference>
<dbReference type="Pfam" id="PF02416">
    <property type="entry name" value="TatA_B_E"/>
    <property type="match status" value="1"/>
</dbReference>
<feature type="chain" id="PRO_1000044360" description="Sec-independent protein translocase protein TatA">
    <location>
        <begin position="1"/>
        <end position="72"/>
    </location>
</feature>
<feature type="transmembrane region" description="Helical" evidence="1">
    <location>
        <begin position="1"/>
        <end position="21"/>
    </location>
</feature>
<feature type="region of interest" description="Disordered" evidence="2">
    <location>
        <begin position="43"/>
        <end position="72"/>
    </location>
</feature>
<feature type="compositionally biased region" description="Basic and acidic residues" evidence="2">
    <location>
        <begin position="50"/>
        <end position="72"/>
    </location>
</feature>
<organism>
    <name type="scientific">Brucella abortus biovar 1 (strain 9-941)</name>
    <dbReference type="NCBI Taxonomy" id="262698"/>
    <lineage>
        <taxon>Bacteria</taxon>
        <taxon>Pseudomonadati</taxon>
        <taxon>Pseudomonadota</taxon>
        <taxon>Alphaproteobacteria</taxon>
        <taxon>Hyphomicrobiales</taxon>
        <taxon>Brucellaceae</taxon>
        <taxon>Brucella/Ochrobactrum group</taxon>
        <taxon>Brucella</taxon>
    </lineage>
</organism>